<protein>
    <recommendedName>
        <fullName evidence="1">Universal stress protein B</fullName>
    </recommendedName>
</protein>
<gene>
    <name evidence="1" type="primary">uspB</name>
    <name type="ordered locus">ETA_33190</name>
</gene>
<comment type="subcellular location">
    <subcellularLocation>
        <location evidence="1">Cell inner membrane</location>
        <topology evidence="1">Multi-pass membrane protein</topology>
    </subcellularLocation>
</comment>
<comment type="similarity">
    <text evidence="1">Belongs to the universal stress protein B family.</text>
</comment>
<evidence type="ECO:0000255" key="1">
    <source>
        <dbReference type="HAMAP-Rule" id="MF_01088"/>
    </source>
</evidence>
<keyword id="KW-0997">Cell inner membrane</keyword>
<keyword id="KW-1003">Cell membrane</keyword>
<keyword id="KW-0472">Membrane</keyword>
<keyword id="KW-1185">Reference proteome</keyword>
<keyword id="KW-0812">Transmembrane</keyword>
<keyword id="KW-1133">Transmembrane helix</keyword>
<proteinExistence type="inferred from homology"/>
<feature type="chain" id="PRO_1000136917" description="Universal stress protein B">
    <location>
        <begin position="1"/>
        <end position="111"/>
    </location>
</feature>
<feature type="transmembrane region" description="Helical" evidence="1">
    <location>
        <begin position="1"/>
        <end position="21"/>
    </location>
</feature>
<feature type="transmembrane region" description="Helical" evidence="1">
    <location>
        <begin position="90"/>
        <end position="110"/>
    </location>
</feature>
<organism>
    <name type="scientific">Erwinia tasmaniensis (strain DSM 17950 / CFBP 7177 / CIP 109463 / NCPPB 4357 / Et1/99)</name>
    <dbReference type="NCBI Taxonomy" id="465817"/>
    <lineage>
        <taxon>Bacteria</taxon>
        <taxon>Pseudomonadati</taxon>
        <taxon>Pseudomonadota</taxon>
        <taxon>Gammaproteobacteria</taxon>
        <taxon>Enterobacterales</taxon>
        <taxon>Erwiniaceae</taxon>
        <taxon>Erwinia</taxon>
    </lineage>
</organism>
<sequence length="111" mass="12622">MISTVSLFWALCVVCVINMARYYSSLRALLVVLRGCDPLLYQYVDGGGFFTSHGQPSKQVRLIGYIWAQRYLDHHDDEFIRRCQRVRGQFILTSALCGLVAIGLIGLAIWH</sequence>
<accession>B2VHE5</accession>
<reference key="1">
    <citation type="journal article" date="2008" name="Environ. Microbiol.">
        <title>The genome of Erwinia tasmaniensis strain Et1/99, a non-pathogenic bacterium in the genus Erwinia.</title>
        <authorList>
            <person name="Kube M."/>
            <person name="Migdoll A.M."/>
            <person name="Mueller I."/>
            <person name="Kuhl H."/>
            <person name="Beck A."/>
            <person name="Reinhardt R."/>
            <person name="Geider K."/>
        </authorList>
    </citation>
    <scope>NUCLEOTIDE SEQUENCE [LARGE SCALE GENOMIC DNA]</scope>
    <source>
        <strain>DSM 17950 / CFBP 7177 / CIP 109463 / NCPPB 4357 / Et1/99</strain>
    </source>
</reference>
<dbReference type="EMBL" id="CU468135">
    <property type="protein sequence ID" value="CAO98365.1"/>
    <property type="molecule type" value="Genomic_DNA"/>
</dbReference>
<dbReference type="RefSeq" id="WP_012442989.1">
    <property type="nucleotide sequence ID" value="NC_010694.1"/>
</dbReference>
<dbReference type="STRING" id="465817.ETA_33190"/>
<dbReference type="KEGG" id="eta:ETA_33190"/>
<dbReference type="eggNOG" id="ENOG502ZP3V">
    <property type="taxonomic scope" value="Bacteria"/>
</dbReference>
<dbReference type="HOGENOM" id="CLU_151816_0_0_6"/>
<dbReference type="OrthoDB" id="6432605at2"/>
<dbReference type="Proteomes" id="UP000001726">
    <property type="component" value="Chromosome"/>
</dbReference>
<dbReference type="GO" id="GO:0005886">
    <property type="term" value="C:plasma membrane"/>
    <property type="evidence" value="ECO:0007669"/>
    <property type="project" value="UniProtKB-SubCell"/>
</dbReference>
<dbReference type="HAMAP" id="MF_01088">
    <property type="entry name" value="UspB"/>
    <property type="match status" value="1"/>
</dbReference>
<dbReference type="InterPro" id="IPR019598">
    <property type="entry name" value="Universal_stress_protein_B"/>
</dbReference>
<dbReference type="NCBIfam" id="NF003435">
    <property type="entry name" value="PRK04960.1"/>
    <property type="match status" value="1"/>
</dbReference>
<dbReference type="Pfam" id="PF10625">
    <property type="entry name" value="UspB"/>
    <property type="match status" value="1"/>
</dbReference>
<name>USPB_ERWT9</name>